<dbReference type="EMBL" id="CP001616">
    <property type="protein sequence ID" value="ACQ91737.1"/>
    <property type="molecule type" value="Genomic_DNA"/>
</dbReference>
<dbReference type="RefSeq" id="WP_012728336.1">
    <property type="nucleotide sequence ID" value="NC_012691.1"/>
</dbReference>
<dbReference type="SMR" id="C4L7T8"/>
<dbReference type="STRING" id="595494.Tola_0107"/>
<dbReference type="KEGG" id="tau:Tola_0107"/>
<dbReference type="eggNOG" id="COG0255">
    <property type="taxonomic scope" value="Bacteria"/>
</dbReference>
<dbReference type="HOGENOM" id="CLU_158491_1_2_6"/>
<dbReference type="OrthoDB" id="9815192at2"/>
<dbReference type="Proteomes" id="UP000009073">
    <property type="component" value="Chromosome"/>
</dbReference>
<dbReference type="GO" id="GO:0022625">
    <property type="term" value="C:cytosolic large ribosomal subunit"/>
    <property type="evidence" value="ECO:0007669"/>
    <property type="project" value="TreeGrafter"/>
</dbReference>
<dbReference type="GO" id="GO:0003735">
    <property type="term" value="F:structural constituent of ribosome"/>
    <property type="evidence" value="ECO:0007669"/>
    <property type="project" value="InterPro"/>
</dbReference>
<dbReference type="GO" id="GO:0006412">
    <property type="term" value="P:translation"/>
    <property type="evidence" value="ECO:0007669"/>
    <property type="project" value="UniProtKB-UniRule"/>
</dbReference>
<dbReference type="CDD" id="cd00427">
    <property type="entry name" value="Ribosomal_L29_HIP"/>
    <property type="match status" value="1"/>
</dbReference>
<dbReference type="FunFam" id="1.10.287.310:FF:000001">
    <property type="entry name" value="50S ribosomal protein L29"/>
    <property type="match status" value="1"/>
</dbReference>
<dbReference type="Gene3D" id="1.10.287.310">
    <property type="match status" value="1"/>
</dbReference>
<dbReference type="HAMAP" id="MF_00374">
    <property type="entry name" value="Ribosomal_uL29"/>
    <property type="match status" value="1"/>
</dbReference>
<dbReference type="InterPro" id="IPR050063">
    <property type="entry name" value="Ribosomal_protein_uL29"/>
</dbReference>
<dbReference type="InterPro" id="IPR001854">
    <property type="entry name" value="Ribosomal_uL29"/>
</dbReference>
<dbReference type="InterPro" id="IPR018254">
    <property type="entry name" value="Ribosomal_uL29_CS"/>
</dbReference>
<dbReference type="InterPro" id="IPR036049">
    <property type="entry name" value="Ribosomal_uL29_sf"/>
</dbReference>
<dbReference type="NCBIfam" id="TIGR00012">
    <property type="entry name" value="L29"/>
    <property type="match status" value="1"/>
</dbReference>
<dbReference type="PANTHER" id="PTHR10916">
    <property type="entry name" value="60S RIBOSOMAL PROTEIN L35/50S RIBOSOMAL PROTEIN L29"/>
    <property type="match status" value="1"/>
</dbReference>
<dbReference type="PANTHER" id="PTHR10916:SF0">
    <property type="entry name" value="LARGE RIBOSOMAL SUBUNIT PROTEIN UL29C"/>
    <property type="match status" value="1"/>
</dbReference>
<dbReference type="Pfam" id="PF00831">
    <property type="entry name" value="Ribosomal_L29"/>
    <property type="match status" value="1"/>
</dbReference>
<dbReference type="SUPFAM" id="SSF46561">
    <property type="entry name" value="Ribosomal protein L29 (L29p)"/>
    <property type="match status" value="1"/>
</dbReference>
<dbReference type="PROSITE" id="PS00579">
    <property type="entry name" value="RIBOSOMAL_L29"/>
    <property type="match status" value="1"/>
</dbReference>
<keyword id="KW-1185">Reference proteome</keyword>
<keyword id="KW-0687">Ribonucleoprotein</keyword>
<keyword id="KW-0689">Ribosomal protein</keyword>
<organism>
    <name type="scientific">Tolumonas auensis (strain DSM 9187 / NBRC 110442 / TA 4)</name>
    <dbReference type="NCBI Taxonomy" id="595494"/>
    <lineage>
        <taxon>Bacteria</taxon>
        <taxon>Pseudomonadati</taxon>
        <taxon>Pseudomonadota</taxon>
        <taxon>Gammaproteobacteria</taxon>
        <taxon>Aeromonadales</taxon>
        <taxon>Aeromonadaceae</taxon>
        <taxon>Tolumonas</taxon>
    </lineage>
</organism>
<accession>C4L7T8</accession>
<reference key="1">
    <citation type="submission" date="2009-05" db="EMBL/GenBank/DDBJ databases">
        <title>Complete sequence of Tolumonas auensis DSM 9187.</title>
        <authorList>
            <consortium name="US DOE Joint Genome Institute"/>
            <person name="Lucas S."/>
            <person name="Copeland A."/>
            <person name="Lapidus A."/>
            <person name="Glavina del Rio T."/>
            <person name="Tice H."/>
            <person name="Bruce D."/>
            <person name="Goodwin L."/>
            <person name="Pitluck S."/>
            <person name="Chertkov O."/>
            <person name="Brettin T."/>
            <person name="Detter J.C."/>
            <person name="Han C."/>
            <person name="Larimer F."/>
            <person name="Land M."/>
            <person name="Hauser L."/>
            <person name="Kyrpides N."/>
            <person name="Mikhailova N."/>
            <person name="Spring S."/>
            <person name="Beller H."/>
        </authorList>
    </citation>
    <scope>NUCLEOTIDE SEQUENCE [LARGE SCALE GENOMIC DNA]</scope>
    <source>
        <strain>DSM 9187 / NBRC 110442 / TA 4</strain>
    </source>
</reference>
<comment type="similarity">
    <text evidence="1">Belongs to the universal ribosomal protein uL29 family.</text>
</comment>
<evidence type="ECO:0000255" key="1">
    <source>
        <dbReference type="HAMAP-Rule" id="MF_00374"/>
    </source>
</evidence>
<evidence type="ECO:0000305" key="2"/>
<protein>
    <recommendedName>
        <fullName evidence="1">Large ribosomal subunit protein uL29</fullName>
    </recommendedName>
    <alternativeName>
        <fullName evidence="2">50S ribosomal protein L29</fullName>
    </alternativeName>
</protein>
<gene>
    <name evidence="1" type="primary">rpmC</name>
    <name type="ordered locus">Tola_0107</name>
</gene>
<name>RL29_TOLAT</name>
<sequence length="63" mass="7214">MKAQDLRQKSVEELKTELLGLLRAQFNLRIQKSTGQLNQTHTIKQVRRDIARVKTVLNEKAGA</sequence>
<proteinExistence type="inferred from homology"/>
<feature type="chain" id="PRO_1000205642" description="Large ribosomal subunit protein uL29">
    <location>
        <begin position="1"/>
        <end position="63"/>
    </location>
</feature>